<evidence type="ECO:0000250" key="1">
    <source>
        <dbReference type="UniProtKB" id="Q8WXC6"/>
    </source>
</evidence>
<evidence type="ECO:0000305" key="2"/>
<proteinExistence type="inferred from homology"/>
<gene>
    <name evidence="1" type="primary">COPS9</name>
    <name type="synonym">MYEOV2</name>
</gene>
<reference key="1">
    <citation type="submission" date="2005-10" db="EMBL/GenBank/DDBJ databases">
        <authorList>
            <consortium name="NIH - Mammalian Gene Collection (MGC) project"/>
        </authorList>
    </citation>
    <scope>NUCLEOTIDE SEQUENCE [LARGE SCALE MRNA]</scope>
    <source>
        <strain>Crossbred X Angus</strain>
        <tissue>Liver</tissue>
    </source>
</reference>
<comment type="function">
    <text evidence="1">Component of the COP9 signalosome complex (CSN), a complex involved in various cellular and developmental processes. The CSN complex is an essential regulator of the ubiquitin (Ubl) conjugation pathway by mediating the deneddylation of the cullin subunits of SCF-type E3 ligase complexes, leading to decrease the Ubl ligase activity of SCF-type complexes such as SCF, CSA or DDB2. The complex is also involved in phosphorylation of p53/TP53, c-jun/JUN, IkappaBalpha/NFKBIA, ITPK1 and IRF8/ICSBP, possibly via its association with CK2 and PKD kinases. CSN-dependent phosphorylation of TP53 and JUN promotes and protects degradation by the Ubl system, respectively. Plays a role in cell proliferation.</text>
</comment>
<comment type="subunit">
    <text evidence="1">Component of the CSN complex, composed of COPS1/GPS1, COPS2, COPS3, COPS4, COPS5, COPS6, COPS7 (COPS7A or COPS7B), COPS8 and COPS9. In the complex, it interacts directly with COPS3, COPS5 and COPS6.</text>
</comment>
<comment type="subcellular location">
    <subcellularLocation>
        <location evidence="1">Nucleus</location>
    </subcellularLocation>
    <subcellularLocation>
        <location evidence="1">Cytoplasm</location>
    </subcellularLocation>
    <subcellularLocation>
        <location evidence="1">Nucleus</location>
        <location evidence="1">Nucleoplasm</location>
    </subcellularLocation>
    <text evidence="1">Excluded from the nucleolus. Recruited to the nucleoplasm and chromatin following DNA damage induction.</text>
</comment>
<comment type="domain">
    <text evidence="1">The Phe/Asp-rich domain at the C-terminus is necessary for its incorporation into the CSN complex.</text>
</comment>
<comment type="similarity">
    <text evidence="2">Belongs to the CSN9 family.</text>
</comment>
<sequence length="57" mass="6211">MKPAVDEMFPEGAGPYVDLDEAGGSTGLLMDLAANEKAVHADFFNDFEDLFDDDDIQ</sequence>
<organism>
    <name type="scientific">Bos taurus</name>
    <name type="common">Bovine</name>
    <dbReference type="NCBI Taxonomy" id="9913"/>
    <lineage>
        <taxon>Eukaryota</taxon>
        <taxon>Metazoa</taxon>
        <taxon>Chordata</taxon>
        <taxon>Craniata</taxon>
        <taxon>Vertebrata</taxon>
        <taxon>Euteleostomi</taxon>
        <taxon>Mammalia</taxon>
        <taxon>Eutheria</taxon>
        <taxon>Laurasiatheria</taxon>
        <taxon>Artiodactyla</taxon>
        <taxon>Ruminantia</taxon>
        <taxon>Pecora</taxon>
        <taxon>Bovidae</taxon>
        <taxon>Bovinae</taxon>
        <taxon>Bos</taxon>
    </lineage>
</organism>
<accession>Q32PD7</accession>
<protein>
    <recommendedName>
        <fullName evidence="2">COP9 signalosome complex subunit 9</fullName>
    </recommendedName>
</protein>
<name>CSN9_BOVIN</name>
<feature type="chain" id="PRO_0000332923" description="COP9 signalosome complex subunit 9">
    <location>
        <begin position="1"/>
        <end position="57"/>
    </location>
</feature>
<feature type="modified residue" description="Phosphothreonine" evidence="1">
    <location>
        <position position="26"/>
    </location>
</feature>
<dbReference type="EMBL" id="BC108156">
    <property type="protein sequence ID" value="AAI08157.1"/>
    <property type="molecule type" value="mRNA"/>
</dbReference>
<dbReference type="RefSeq" id="NP_001181980.1">
    <property type="nucleotide sequence ID" value="NM_001195051.1"/>
</dbReference>
<dbReference type="FunCoup" id="Q32PD7">
    <property type="interactions" value="469"/>
</dbReference>
<dbReference type="STRING" id="9913.ENSBTAP00000014490"/>
<dbReference type="PaxDb" id="9913-ENSBTAP00000014490"/>
<dbReference type="Ensembl" id="ENSBTAT00000014490.5">
    <property type="protein sequence ID" value="ENSBTAP00000014490.4"/>
    <property type="gene ID" value="ENSBTAG00000010910.5"/>
</dbReference>
<dbReference type="GeneID" id="617407"/>
<dbReference type="KEGG" id="bta:617407"/>
<dbReference type="CTD" id="150678"/>
<dbReference type="VEuPathDB" id="HostDB:ENSBTAG00000010910"/>
<dbReference type="VGNC" id="VGNC:54910">
    <property type="gene designation" value="COPS9"/>
</dbReference>
<dbReference type="eggNOG" id="ENOG502S7KZ">
    <property type="taxonomic scope" value="Eukaryota"/>
</dbReference>
<dbReference type="GeneTree" id="ENSGT00390000000076"/>
<dbReference type="HOGENOM" id="CLU_191079_0_0_1"/>
<dbReference type="InParanoid" id="Q32PD7"/>
<dbReference type="OMA" id="SNDKHVH"/>
<dbReference type="OrthoDB" id="9972368at2759"/>
<dbReference type="TreeFam" id="TF323869"/>
<dbReference type="Proteomes" id="UP000009136">
    <property type="component" value="Chromosome 3"/>
</dbReference>
<dbReference type="Bgee" id="ENSBTAG00000010910">
    <property type="expression patterns" value="Expressed in oocyte and 104 other cell types or tissues"/>
</dbReference>
<dbReference type="GO" id="GO:0000785">
    <property type="term" value="C:chromatin"/>
    <property type="evidence" value="ECO:0000250"/>
    <property type="project" value="UniProtKB"/>
</dbReference>
<dbReference type="GO" id="GO:0008180">
    <property type="term" value="C:COP9 signalosome"/>
    <property type="evidence" value="ECO:0000250"/>
    <property type="project" value="UniProtKB"/>
</dbReference>
<dbReference type="GO" id="GO:0005737">
    <property type="term" value="C:cytoplasm"/>
    <property type="evidence" value="ECO:0000250"/>
    <property type="project" value="UniProtKB"/>
</dbReference>
<dbReference type="GO" id="GO:0005654">
    <property type="term" value="C:nucleoplasm"/>
    <property type="evidence" value="ECO:0000250"/>
    <property type="project" value="UniProtKB"/>
</dbReference>
<dbReference type="GO" id="GO:0005634">
    <property type="term" value="C:nucleus"/>
    <property type="evidence" value="ECO:0000250"/>
    <property type="project" value="UniProtKB"/>
</dbReference>
<dbReference type="GO" id="GO:0034644">
    <property type="term" value="P:cellular response to UV"/>
    <property type="evidence" value="ECO:0000250"/>
    <property type="project" value="UniProtKB"/>
</dbReference>
<dbReference type="GO" id="GO:0008284">
    <property type="term" value="P:positive regulation of cell population proliferation"/>
    <property type="evidence" value="ECO:0000250"/>
    <property type="project" value="UniProtKB"/>
</dbReference>
<dbReference type="InterPro" id="IPR029391">
    <property type="entry name" value="CSN9_metazoa"/>
</dbReference>
<dbReference type="PANTHER" id="PTHR28562">
    <property type="entry name" value="COP9 SIGNALOSOME COMPLEX SUBUNIT 9"/>
    <property type="match status" value="1"/>
</dbReference>
<dbReference type="Pfam" id="PF15004">
    <property type="entry name" value="MYEOV2"/>
    <property type="match status" value="1"/>
</dbReference>
<keyword id="KW-0963">Cytoplasm</keyword>
<keyword id="KW-0539">Nucleus</keyword>
<keyword id="KW-0597">Phosphoprotein</keyword>
<keyword id="KW-1185">Reference proteome</keyword>
<keyword id="KW-0736">Signalosome</keyword>